<comment type="function">
    <text evidence="1">Catalyzes the reduction of hydroxylamine to form NH(3) and H(2)O.</text>
</comment>
<comment type="catalytic activity">
    <reaction evidence="1">
        <text>A + NH4(+) + H2O = hydroxylamine + AH2 + H(+)</text>
        <dbReference type="Rhea" id="RHEA:22052"/>
        <dbReference type="ChEBI" id="CHEBI:13193"/>
        <dbReference type="ChEBI" id="CHEBI:15377"/>
        <dbReference type="ChEBI" id="CHEBI:15378"/>
        <dbReference type="ChEBI" id="CHEBI:15429"/>
        <dbReference type="ChEBI" id="CHEBI:17499"/>
        <dbReference type="ChEBI" id="CHEBI:28938"/>
        <dbReference type="EC" id="1.7.99.1"/>
    </reaction>
</comment>
<comment type="cofactor">
    <cofactor evidence="1">
        <name>[2Fe-2S] cluster</name>
        <dbReference type="ChEBI" id="CHEBI:190135"/>
    </cofactor>
    <text evidence="1">Binds 1 [2Fe-2S] cluster.</text>
</comment>
<comment type="cofactor">
    <cofactor evidence="1">
        <name>hybrid [4Fe-2O-2S] cluster</name>
        <dbReference type="ChEBI" id="CHEBI:60519"/>
    </cofactor>
    <text evidence="1">Binds 1 hybrid [4Fe-2O-2S] cluster.</text>
</comment>
<comment type="subcellular location">
    <subcellularLocation>
        <location evidence="1">Cytoplasm</location>
    </subcellularLocation>
</comment>
<comment type="similarity">
    <text evidence="1">Belongs to the HCP family.</text>
</comment>
<organism>
    <name type="scientific">Aeromonas salmonicida (strain A449)</name>
    <dbReference type="NCBI Taxonomy" id="382245"/>
    <lineage>
        <taxon>Bacteria</taxon>
        <taxon>Pseudomonadati</taxon>
        <taxon>Pseudomonadota</taxon>
        <taxon>Gammaproteobacteria</taxon>
        <taxon>Aeromonadales</taxon>
        <taxon>Aeromonadaceae</taxon>
        <taxon>Aeromonas</taxon>
    </lineage>
</organism>
<accession>A4SQN8</accession>
<dbReference type="EC" id="1.7.99.1" evidence="1"/>
<dbReference type="EMBL" id="CP000644">
    <property type="protein sequence ID" value="ABO91210.1"/>
    <property type="molecule type" value="Genomic_DNA"/>
</dbReference>
<dbReference type="SMR" id="A4SQN8"/>
<dbReference type="STRING" id="29491.GCA_000820065_03599"/>
<dbReference type="KEGG" id="asa:ASA_3219"/>
<dbReference type="eggNOG" id="COG1151">
    <property type="taxonomic scope" value="Bacteria"/>
</dbReference>
<dbReference type="HOGENOM" id="CLU_038344_2_0_6"/>
<dbReference type="Proteomes" id="UP000000225">
    <property type="component" value="Chromosome"/>
</dbReference>
<dbReference type="GO" id="GO:0005737">
    <property type="term" value="C:cytoplasm"/>
    <property type="evidence" value="ECO:0007669"/>
    <property type="project" value="UniProtKB-SubCell"/>
</dbReference>
<dbReference type="GO" id="GO:0051537">
    <property type="term" value="F:2 iron, 2 sulfur cluster binding"/>
    <property type="evidence" value="ECO:0007669"/>
    <property type="project" value="UniProtKB-KW"/>
</dbReference>
<dbReference type="GO" id="GO:0050418">
    <property type="term" value="F:hydroxylamine reductase activity"/>
    <property type="evidence" value="ECO:0007669"/>
    <property type="project" value="UniProtKB-UniRule"/>
</dbReference>
<dbReference type="GO" id="GO:0046872">
    <property type="term" value="F:metal ion binding"/>
    <property type="evidence" value="ECO:0007669"/>
    <property type="project" value="UniProtKB-KW"/>
</dbReference>
<dbReference type="GO" id="GO:0004601">
    <property type="term" value="F:peroxidase activity"/>
    <property type="evidence" value="ECO:0007669"/>
    <property type="project" value="TreeGrafter"/>
</dbReference>
<dbReference type="GO" id="GO:0042542">
    <property type="term" value="P:response to hydrogen peroxide"/>
    <property type="evidence" value="ECO:0007669"/>
    <property type="project" value="TreeGrafter"/>
</dbReference>
<dbReference type="CDD" id="cd01914">
    <property type="entry name" value="HCP"/>
    <property type="match status" value="1"/>
</dbReference>
<dbReference type="FunFam" id="1.20.1270.20:FF:000001">
    <property type="entry name" value="Hydroxylamine reductase"/>
    <property type="match status" value="1"/>
</dbReference>
<dbReference type="FunFam" id="1.20.1270.20:FF:000002">
    <property type="entry name" value="Hydroxylamine reductase"/>
    <property type="match status" value="1"/>
</dbReference>
<dbReference type="FunFam" id="3.40.50.2030:FF:000001">
    <property type="entry name" value="Hydroxylamine reductase"/>
    <property type="match status" value="1"/>
</dbReference>
<dbReference type="FunFam" id="3.40.50.2030:FF:000002">
    <property type="entry name" value="Hydroxylamine reductase"/>
    <property type="match status" value="1"/>
</dbReference>
<dbReference type="Gene3D" id="1.20.1270.20">
    <property type="match status" value="2"/>
</dbReference>
<dbReference type="Gene3D" id="3.40.50.2030">
    <property type="match status" value="2"/>
</dbReference>
<dbReference type="HAMAP" id="MF_00069">
    <property type="entry name" value="Hydroxylam_reduct"/>
    <property type="match status" value="1"/>
</dbReference>
<dbReference type="InterPro" id="IPR004137">
    <property type="entry name" value="HCP/CODH"/>
</dbReference>
<dbReference type="InterPro" id="IPR010048">
    <property type="entry name" value="Hydroxylam_reduct"/>
</dbReference>
<dbReference type="InterPro" id="IPR016099">
    <property type="entry name" value="Prismane-like_a/b-sand"/>
</dbReference>
<dbReference type="InterPro" id="IPR011254">
    <property type="entry name" value="Prismane-like_sf"/>
</dbReference>
<dbReference type="InterPro" id="IPR016100">
    <property type="entry name" value="Prismane_a-bundle"/>
</dbReference>
<dbReference type="NCBIfam" id="TIGR01703">
    <property type="entry name" value="hybrid_clust"/>
    <property type="match status" value="1"/>
</dbReference>
<dbReference type="NCBIfam" id="NF003658">
    <property type="entry name" value="PRK05290.1"/>
    <property type="match status" value="1"/>
</dbReference>
<dbReference type="PANTHER" id="PTHR30109">
    <property type="entry name" value="HYDROXYLAMINE REDUCTASE"/>
    <property type="match status" value="1"/>
</dbReference>
<dbReference type="PANTHER" id="PTHR30109:SF0">
    <property type="entry name" value="HYDROXYLAMINE REDUCTASE"/>
    <property type="match status" value="1"/>
</dbReference>
<dbReference type="Pfam" id="PF03063">
    <property type="entry name" value="Prismane"/>
    <property type="match status" value="1"/>
</dbReference>
<dbReference type="PIRSF" id="PIRSF000076">
    <property type="entry name" value="HCP"/>
    <property type="match status" value="1"/>
</dbReference>
<dbReference type="SUPFAM" id="SSF56821">
    <property type="entry name" value="Prismane protein-like"/>
    <property type="match status" value="1"/>
</dbReference>
<reference key="1">
    <citation type="journal article" date="2008" name="BMC Genomics">
        <title>The genome of Aeromonas salmonicida subsp. salmonicida A449: insights into the evolution of a fish pathogen.</title>
        <authorList>
            <person name="Reith M.E."/>
            <person name="Singh R.K."/>
            <person name="Curtis B."/>
            <person name="Boyd J.M."/>
            <person name="Bouevitch A."/>
            <person name="Kimball J."/>
            <person name="Munholland J."/>
            <person name="Murphy C."/>
            <person name="Sarty D."/>
            <person name="Williams J."/>
            <person name="Nash J.H."/>
            <person name="Johnson S.C."/>
            <person name="Brown L.L."/>
        </authorList>
    </citation>
    <scope>NUCLEOTIDE SEQUENCE [LARGE SCALE GENOMIC DNA]</scope>
    <source>
        <strain>A449</strain>
    </source>
</reference>
<sequence length="550" mass="59622">MMFCVQCEQTIRTPAGNGCAYAQGMCGKTAETSDLQDVLIYALQDLSAWVLAAREHGVIDNEIDAFVPKAFFATLTNVNFDSARIVAYVNQALAHRQQLVDRLAALAVQVTGLPEATGFEPGDELLAQLAHASQTAVNRGKSEVHEDIMGLRLLCLYGLKGAAAYMEHARVLGQQDSEVAAEFHRIMSWLSTDPSELDSLFKCAMEIGLLNFRVMEMLDLGETTAFGHPEPTQVRVTPVPGKCILVSGHDMVDLKLILEQTAGTGIHVYTHGEMLPALAYPFFKQYPHLVGNYGSAWQNQQKEFANFPGAVVMTSNCIIDPNVGDYSDRIFTRSIVGWPGVTHLEGDDFSAVVAKALSLDGFKHTELEHFITIGFARNALMQAAPAVIEKVKAGEISHFFLVGGCDGDKAERAYFTEFAKAAPKDSLLLTLGCGKYKFNKLDFGNIGGIPRLLDVGQCNDAYSAIQLALALSEAFECGVNDLPLTLVLSWFEQKAIVILLTLLALGVKDIRTGPTAPAFLTPALLKVLEEQFGLKGTTTAEADLAEILAA</sequence>
<proteinExistence type="inferred from homology"/>
<gene>
    <name evidence="1" type="primary">hcp</name>
    <name type="ordered locus">ASA_3219</name>
</gene>
<name>HCP_AERS4</name>
<feature type="chain" id="PRO_1000009141" description="Hydroxylamine reductase">
    <location>
        <begin position="1"/>
        <end position="550"/>
    </location>
</feature>
<feature type="binding site" evidence="1">
    <location>
        <position position="4"/>
    </location>
    <ligand>
        <name>[2Fe-2S] cluster</name>
        <dbReference type="ChEBI" id="CHEBI:190135"/>
    </ligand>
</feature>
<feature type="binding site" evidence="1">
    <location>
        <position position="7"/>
    </location>
    <ligand>
        <name>[2Fe-2S] cluster</name>
        <dbReference type="ChEBI" id="CHEBI:190135"/>
    </ligand>
</feature>
<feature type="binding site" evidence="1">
    <location>
        <position position="19"/>
    </location>
    <ligand>
        <name>[2Fe-2S] cluster</name>
        <dbReference type="ChEBI" id="CHEBI:190135"/>
    </ligand>
</feature>
<feature type="binding site" evidence="1">
    <location>
        <position position="26"/>
    </location>
    <ligand>
        <name>[2Fe-2S] cluster</name>
        <dbReference type="ChEBI" id="CHEBI:190135"/>
    </ligand>
</feature>
<feature type="binding site" evidence="1">
    <location>
        <position position="249"/>
    </location>
    <ligand>
        <name>hybrid [4Fe-2O-2S] cluster</name>
        <dbReference type="ChEBI" id="CHEBI:60519"/>
    </ligand>
</feature>
<feature type="binding site" evidence="1">
    <location>
        <position position="273"/>
    </location>
    <ligand>
        <name>hybrid [4Fe-2O-2S] cluster</name>
        <dbReference type="ChEBI" id="CHEBI:60519"/>
    </ligand>
</feature>
<feature type="binding site" evidence="1">
    <location>
        <position position="317"/>
    </location>
    <ligand>
        <name>hybrid [4Fe-2O-2S] cluster</name>
        <dbReference type="ChEBI" id="CHEBI:60519"/>
    </ligand>
</feature>
<feature type="binding site" description="via persulfide group" evidence="1">
    <location>
        <position position="405"/>
    </location>
    <ligand>
        <name>hybrid [4Fe-2O-2S] cluster</name>
        <dbReference type="ChEBI" id="CHEBI:60519"/>
    </ligand>
</feature>
<feature type="binding site" evidence="1">
    <location>
        <position position="433"/>
    </location>
    <ligand>
        <name>hybrid [4Fe-2O-2S] cluster</name>
        <dbReference type="ChEBI" id="CHEBI:60519"/>
    </ligand>
</feature>
<feature type="binding site" evidence="1">
    <location>
        <position position="458"/>
    </location>
    <ligand>
        <name>hybrid [4Fe-2O-2S] cluster</name>
        <dbReference type="ChEBI" id="CHEBI:60519"/>
    </ligand>
</feature>
<feature type="binding site" evidence="1">
    <location>
        <position position="492"/>
    </location>
    <ligand>
        <name>hybrid [4Fe-2O-2S] cluster</name>
        <dbReference type="ChEBI" id="CHEBI:60519"/>
    </ligand>
</feature>
<feature type="binding site" evidence="1">
    <location>
        <position position="494"/>
    </location>
    <ligand>
        <name>hybrid [4Fe-2O-2S] cluster</name>
        <dbReference type="ChEBI" id="CHEBI:60519"/>
    </ligand>
</feature>
<feature type="modified residue" description="Cysteine persulfide" evidence="1">
    <location>
        <position position="405"/>
    </location>
</feature>
<protein>
    <recommendedName>
        <fullName evidence="1">Hydroxylamine reductase</fullName>
        <ecNumber evidence="1">1.7.99.1</ecNumber>
    </recommendedName>
    <alternativeName>
        <fullName evidence="1">Hybrid-cluster protein</fullName>
        <shortName evidence="1">HCP</shortName>
    </alternativeName>
    <alternativeName>
        <fullName evidence="1">Prismane protein</fullName>
    </alternativeName>
</protein>
<keyword id="KW-0001">2Fe-2S</keyword>
<keyword id="KW-0963">Cytoplasm</keyword>
<keyword id="KW-0408">Iron</keyword>
<keyword id="KW-0411">Iron-sulfur</keyword>
<keyword id="KW-0479">Metal-binding</keyword>
<keyword id="KW-0560">Oxidoreductase</keyword>
<evidence type="ECO:0000255" key="1">
    <source>
        <dbReference type="HAMAP-Rule" id="MF_00069"/>
    </source>
</evidence>